<evidence type="ECO:0000255" key="1">
    <source>
        <dbReference type="HAMAP-Rule" id="MF_01364"/>
    </source>
</evidence>
<evidence type="ECO:0000305" key="2"/>
<proteinExistence type="inferred from homology"/>
<feature type="chain" id="PRO_1000143927" description="Small ribosomal subunit protein uS14">
    <location>
        <begin position="1"/>
        <end position="61"/>
    </location>
</feature>
<feature type="binding site" evidence="1">
    <location>
        <position position="24"/>
    </location>
    <ligand>
        <name>Zn(2+)</name>
        <dbReference type="ChEBI" id="CHEBI:29105"/>
    </ligand>
</feature>
<feature type="binding site" evidence="1">
    <location>
        <position position="27"/>
    </location>
    <ligand>
        <name>Zn(2+)</name>
        <dbReference type="ChEBI" id="CHEBI:29105"/>
    </ligand>
</feature>
<feature type="binding site" evidence="1">
    <location>
        <position position="40"/>
    </location>
    <ligand>
        <name>Zn(2+)</name>
        <dbReference type="ChEBI" id="CHEBI:29105"/>
    </ligand>
</feature>
<feature type="binding site" evidence="1">
    <location>
        <position position="43"/>
    </location>
    <ligand>
        <name>Zn(2+)</name>
        <dbReference type="ChEBI" id="CHEBI:29105"/>
    </ligand>
</feature>
<reference key="1">
    <citation type="journal article" date="2008" name="Proc. Natl. Acad. Sci. U.S.A.">
        <title>Complete genome of the uncultured termite group 1 bacteria in a single host protist cell.</title>
        <authorList>
            <person name="Hongoh Y."/>
            <person name="Sharma V.K."/>
            <person name="Prakash T."/>
            <person name="Noda S."/>
            <person name="Taylor T.D."/>
            <person name="Kudo T."/>
            <person name="Sakaki Y."/>
            <person name="Toyoda A."/>
            <person name="Hattori M."/>
            <person name="Ohkuma M."/>
        </authorList>
    </citation>
    <scope>NUCLEOTIDE SEQUENCE [LARGE SCALE GENOMIC DNA]</scope>
</reference>
<protein>
    <recommendedName>
        <fullName evidence="1">Small ribosomal subunit protein uS14</fullName>
    </recommendedName>
    <alternativeName>
        <fullName evidence="2">30S ribosomal protein S14 type Z</fullName>
    </alternativeName>
</protein>
<organism>
    <name type="scientific">Endomicrobium trichonymphae</name>
    <dbReference type="NCBI Taxonomy" id="1408204"/>
    <lineage>
        <taxon>Bacteria</taxon>
        <taxon>Pseudomonadati</taxon>
        <taxon>Elusimicrobiota</taxon>
        <taxon>Endomicrobiia</taxon>
        <taxon>Endomicrobiales</taxon>
        <taxon>Endomicrobiaceae</taxon>
        <taxon>Candidatus Endomicrobiellum</taxon>
    </lineage>
</organism>
<keyword id="KW-0479">Metal-binding</keyword>
<keyword id="KW-0687">Ribonucleoprotein</keyword>
<keyword id="KW-0689">Ribosomal protein</keyword>
<keyword id="KW-0694">RNA-binding</keyword>
<keyword id="KW-0699">rRNA-binding</keyword>
<keyword id="KW-0862">Zinc</keyword>
<sequence>MATTSAEAKMRKPQKFATRYRNRCRLCGRPRGYYRDFGICRICLRKLAYNGEIPGVTKSSW</sequence>
<dbReference type="EMBL" id="AP009510">
    <property type="protein sequence ID" value="BAG13578.1"/>
    <property type="molecule type" value="Genomic_DNA"/>
</dbReference>
<dbReference type="RefSeq" id="WP_015423107.1">
    <property type="nucleotide sequence ID" value="NC_020419.1"/>
</dbReference>
<dbReference type="SMR" id="B1GZ96"/>
<dbReference type="STRING" id="471821.TGRD_095"/>
<dbReference type="KEGG" id="eti:RSTT_080"/>
<dbReference type="KEGG" id="rsd:TGRD_095"/>
<dbReference type="PATRIC" id="fig|471821.5.peg.139"/>
<dbReference type="HOGENOM" id="CLU_139869_3_0_0"/>
<dbReference type="OrthoDB" id="9810484at2"/>
<dbReference type="Proteomes" id="UP000001691">
    <property type="component" value="Chromosome"/>
</dbReference>
<dbReference type="GO" id="GO:0005737">
    <property type="term" value="C:cytoplasm"/>
    <property type="evidence" value="ECO:0007669"/>
    <property type="project" value="UniProtKB-ARBA"/>
</dbReference>
<dbReference type="GO" id="GO:0015935">
    <property type="term" value="C:small ribosomal subunit"/>
    <property type="evidence" value="ECO:0007669"/>
    <property type="project" value="TreeGrafter"/>
</dbReference>
<dbReference type="GO" id="GO:0019843">
    <property type="term" value="F:rRNA binding"/>
    <property type="evidence" value="ECO:0007669"/>
    <property type="project" value="UniProtKB-UniRule"/>
</dbReference>
<dbReference type="GO" id="GO:0003735">
    <property type="term" value="F:structural constituent of ribosome"/>
    <property type="evidence" value="ECO:0007669"/>
    <property type="project" value="InterPro"/>
</dbReference>
<dbReference type="GO" id="GO:0008270">
    <property type="term" value="F:zinc ion binding"/>
    <property type="evidence" value="ECO:0007669"/>
    <property type="project" value="UniProtKB-UniRule"/>
</dbReference>
<dbReference type="GO" id="GO:0006412">
    <property type="term" value="P:translation"/>
    <property type="evidence" value="ECO:0007669"/>
    <property type="project" value="UniProtKB-UniRule"/>
</dbReference>
<dbReference type="FunFam" id="4.10.830.10:FF:000001">
    <property type="entry name" value="30S ribosomal protein S14 type Z"/>
    <property type="match status" value="1"/>
</dbReference>
<dbReference type="Gene3D" id="4.10.830.10">
    <property type="entry name" value="30s Ribosomal Protein S14, Chain N"/>
    <property type="match status" value="1"/>
</dbReference>
<dbReference type="HAMAP" id="MF_01364_B">
    <property type="entry name" value="Ribosomal_uS14_2_B"/>
    <property type="match status" value="1"/>
</dbReference>
<dbReference type="InterPro" id="IPR001209">
    <property type="entry name" value="Ribosomal_uS14"/>
</dbReference>
<dbReference type="InterPro" id="IPR023053">
    <property type="entry name" value="Ribosomal_uS14_bact"/>
</dbReference>
<dbReference type="InterPro" id="IPR018271">
    <property type="entry name" value="Ribosomal_uS14_CS"/>
</dbReference>
<dbReference type="InterPro" id="IPR043140">
    <property type="entry name" value="Ribosomal_uS14_sf"/>
</dbReference>
<dbReference type="NCBIfam" id="NF005974">
    <property type="entry name" value="PRK08061.1"/>
    <property type="match status" value="1"/>
</dbReference>
<dbReference type="PANTHER" id="PTHR19836">
    <property type="entry name" value="30S RIBOSOMAL PROTEIN S14"/>
    <property type="match status" value="1"/>
</dbReference>
<dbReference type="PANTHER" id="PTHR19836:SF19">
    <property type="entry name" value="SMALL RIBOSOMAL SUBUNIT PROTEIN US14M"/>
    <property type="match status" value="1"/>
</dbReference>
<dbReference type="Pfam" id="PF00253">
    <property type="entry name" value="Ribosomal_S14"/>
    <property type="match status" value="1"/>
</dbReference>
<dbReference type="SUPFAM" id="SSF57716">
    <property type="entry name" value="Glucocorticoid receptor-like (DNA-binding domain)"/>
    <property type="match status" value="1"/>
</dbReference>
<dbReference type="PROSITE" id="PS00527">
    <property type="entry name" value="RIBOSOMAL_S14"/>
    <property type="match status" value="1"/>
</dbReference>
<name>RS14Z_ENDTX</name>
<gene>
    <name evidence="1" type="primary">rpsZ</name>
    <name evidence="1" type="synonym">rpsN</name>
    <name type="ordered locus">TGRD_095</name>
</gene>
<accession>B1GZ96</accession>
<comment type="function">
    <text evidence="1">Binds 16S rRNA, required for the assembly of 30S particles and may also be responsible for determining the conformation of the 16S rRNA at the A site.</text>
</comment>
<comment type="cofactor">
    <cofactor evidence="1">
        <name>Zn(2+)</name>
        <dbReference type="ChEBI" id="CHEBI:29105"/>
    </cofactor>
    <text evidence="1">Binds 1 zinc ion per subunit.</text>
</comment>
<comment type="subunit">
    <text evidence="1">Part of the 30S ribosomal subunit. Contacts proteins S3 and S10.</text>
</comment>
<comment type="similarity">
    <text evidence="1">Belongs to the universal ribosomal protein uS14 family. Zinc-binding uS14 subfamily.</text>
</comment>